<organism>
    <name type="scientific">Mycobacterium tuberculosis (strain ATCC 25618 / H37Rv)</name>
    <dbReference type="NCBI Taxonomy" id="83332"/>
    <lineage>
        <taxon>Bacteria</taxon>
        <taxon>Bacillati</taxon>
        <taxon>Actinomycetota</taxon>
        <taxon>Actinomycetes</taxon>
        <taxon>Mycobacteriales</taxon>
        <taxon>Mycobacteriaceae</taxon>
        <taxon>Mycobacterium</taxon>
        <taxon>Mycobacterium tuberculosis complex</taxon>
    </lineage>
</organism>
<sequence>MLHRDDHINPPRPRGLDVPCARLRATNPLRALARCVQAGKPGTSSGHRSVPHTADLRIEAWAPTRDGCIRQAVLGTVESFLDLESAHAVHTRLRRLTADRDDDLLVAVLEEVIYLLDTVGETPVDLRLRDVDGGVDVTFATTDASTLVQVGAVPKAVSLNELRFSQGRHGWRCAVTLDV</sequence>
<dbReference type="EMBL" id="AL123456">
    <property type="protein sequence ID" value="CCP45428.1"/>
    <property type="molecule type" value="Genomic_DNA"/>
</dbReference>
<dbReference type="PIR" id="E70573">
    <property type="entry name" value="E70573"/>
</dbReference>
<dbReference type="RefSeq" id="NP_217146.1">
    <property type="nucleotide sequence ID" value="NC_000962.3"/>
</dbReference>
<dbReference type="RefSeq" id="WP_003413614.1">
    <property type="nucleotide sequence ID" value="NZ_NVQJ01000075.1"/>
</dbReference>
<dbReference type="SMR" id="P9WQ03"/>
<dbReference type="STRING" id="83332.Rv2630"/>
<dbReference type="PaxDb" id="83332-Rv2630"/>
<dbReference type="DNASU" id="887426"/>
<dbReference type="GeneID" id="887426"/>
<dbReference type="KEGG" id="mtu:Rv2630"/>
<dbReference type="KEGG" id="mtv:RVBD_2630"/>
<dbReference type="TubercuList" id="Rv2630"/>
<dbReference type="eggNOG" id="COG1371">
    <property type="taxonomic scope" value="Bacteria"/>
</dbReference>
<dbReference type="InParanoid" id="P9WQ03"/>
<dbReference type="OrthoDB" id="3827441at2"/>
<dbReference type="Proteomes" id="UP000001584">
    <property type="component" value="Chromosome"/>
</dbReference>
<dbReference type="GO" id="GO:0046872">
    <property type="term" value="F:metal ion binding"/>
    <property type="evidence" value="ECO:0007669"/>
    <property type="project" value="UniProtKB-KW"/>
</dbReference>
<dbReference type="GO" id="GO:0008033">
    <property type="term" value="P:tRNA processing"/>
    <property type="evidence" value="ECO:0007669"/>
    <property type="project" value="UniProtKB-KW"/>
</dbReference>
<dbReference type="Gene3D" id="3.55.10.10">
    <property type="entry name" value="Archease domain"/>
    <property type="match status" value="1"/>
</dbReference>
<dbReference type="InterPro" id="IPR023572">
    <property type="entry name" value="Archease_dom"/>
</dbReference>
<dbReference type="InterPro" id="IPR036820">
    <property type="entry name" value="Archease_dom_sf"/>
</dbReference>
<dbReference type="Pfam" id="PF01951">
    <property type="entry name" value="Archease"/>
    <property type="match status" value="1"/>
</dbReference>
<dbReference type="SUPFAM" id="SSF69819">
    <property type="entry name" value="MTH1598-like"/>
    <property type="match status" value="1"/>
</dbReference>
<evidence type="ECO:0000250" key="1"/>
<evidence type="ECO:0000269" key="2">
    <source>
    </source>
</evidence>
<evidence type="ECO:0000269" key="3">
    <source>
    </source>
</evidence>
<evidence type="ECO:0000269" key="4">
    <source>
    </source>
</evidence>
<evidence type="ECO:0000269" key="5">
    <source>
    </source>
</evidence>
<evidence type="ECO:0000305" key="6"/>
<comment type="function">
    <text evidence="1">Activates the tRNA-splicing ligase complex by facilitating the enzymatic turnover of catalytic subunit RtcB. Acts by promoting the guanylylation of RtcB, a key intermediate step in tRNA ligation. Can also alter the NTP specificity of RtcB such that ATP, dGTP or ITP is used efficiently (By similarity).</text>
</comment>
<comment type="induction">
    <text evidence="2 3 4 5">A member of the dormancy regulon. Induced in response to reduced oxygen tension (hypoxia), low levels of nitric oxide (NO) and carbon monoxide (CO). It is hoped that this regulon will give insight into the latent, or dormant phase of infection.</text>
</comment>
<comment type="similarity">
    <text evidence="6">Belongs to the archease family.</text>
</comment>
<name>ARCH_MYCTU</name>
<keyword id="KW-0106">Calcium</keyword>
<keyword id="KW-0479">Metal-binding</keyword>
<keyword id="KW-1185">Reference proteome</keyword>
<keyword id="KW-0819">tRNA processing</keyword>
<feature type="chain" id="PRO_0000392933" description="Probable protein archease">
    <location>
        <begin position="1"/>
        <end position="179"/>
    </location>
</feature>
<feature type="binding site" evidence="1">
    <location>
        <position position="55"/>
    </location>
    <ligand>
        <name>Ca(2+)</name>
        <dbReference type="ChEBI" id="CHEBI:29108"/>
    </ligand>
</feature>
<feature type="binding site" evidence="1">
    <location>
        <position position="178"/>
    </location>
    <ligand>
        <name>Ca(2+)</name>
        <dbReference type="ChEBI" id="CHEBI:29108"/>
    </ligand>
</feature>
<feature type="binding site" evidence="1">
    <location>
        <position position="179"/>
    </location>
    <ligand>
        <name>Ca(2+)</name>
        <dbReference type="ChEBI" id="CHEBI:29108"/>
    </ligand>
</feature>
<gene>
    <name type="ordered locus">Rv2630</name>
</gene>
<accession>P9WQ03</accession>
<accession>L0TCY0</accession>
<accession>O06182</accession>
<accession>Q7D6V0</accession>
<reference key="1">
    <citation type="journal article" date="1998" name="Nature">
        <title>Deciphering the biology of Mycobacterium tuberculosis from the complete genome sequence.</title>
        <authorList>
            <person name="Cole S.T."/>
            <person name="Brosch R."/>
            <person name="Parkhill J."/>
            <person name="Garnier T."/>
            <person name="Churcher C.M."/>
            <person name="Harris D.E."/>
            <person name="Gordon S.V."/>
            <person name="Eiglmeier K."/>
            <person name="Gas S."/>
            <person name="Barry C.E. III"/>
            <person name="Tekaia F."/>
            <person name="Badcock K."/>
            <person name="Basham D."/>
            <person name="Brown D."/>
            <person name="Chillingworth T."/>
            <person name="Connor R."/>
            <person name="Davies R.M."/>
            <person name="Devlin K."/>
            <person name="Feltwell T."/>
            <person name="Gentles S."/>
            <person name="Hamlin N."/>
            <person name="Holroyd S."/>
            <person name="Hornsby T."/>
            <person name="Jagels K."/>
            <person name="Krogh A."/>
            <person name="McLean J."/>
            <person name="Moule S."/>
            <person name="Murphy L.D."/>
            <person name="Oliver S."/>
            <person name="Osborne J."/>
            <person name="Quail M.A."/>
            <person name="Rajandream M.A."/>
            <person name="Rogers J."/>
            <person name="Rutter S."/>
            <person name="Seeger K."/>
            <person name="Skelton S."/>
            <person name="Squares S."/>
            <person name="Squares R."/>
            <person name="Sulston J.E."/>
            <person name="Taylor K."/>
            <person name="Whitehead S."/>
            <person name="Barrell B.G."/>
        </authorList>
    </citation>
    <scope>NUCLEOTIDE SEQUENCE [LARGE SCALE GENOMIC DNA]</scope>
    <source>
        <strain>ATCC 25618 / H37Rv</strain>
    </source>
</reference>
<reference key="2">
    <citation type="journal article" date="2001" name="Proc. Natl. Acad. Sci. U.S.A.">
        <title>Regulation of the Mycobacterium tuberculosis hypoxic response gene encoding alpha -crystallin.</title>
        <authorList>
            <person name="Sherman D.R."/>
            <person name="Voskuil M."/>
            <person name="Schnappinger D."/>
            <person name="Liao R."/>
            <person name="Harrell M.I."/>
            <person name="Schoolnik G.K."/>
        </authorList>
    </citation>
    <scope>INDUCTION BY HYPOXIA</scope>
    <source>
        <strain>ATCC 25618 / H37Rv</strain>
    </source>
</reference>
<reference key="3">
    <citation type="journal article" date="2003" name="J. Exp. Med.">
        <title>Inhibition of respiration by nitric oxide induces a Mycobacterium tuberculosis dormancy program.</title>
        <authorList>
            <person name="Voskuil M.I."/>
            <person name="Schnappinger D."/>
            <person name="Visconti K.C."/>
            <person name="Harrell M.I."/>
            <person name="Dolganov G.M."/>
            <person name="Sherman D.R."/>
            <person name="Schoolnik G.K."/>
        </authorList>
    </citation>
    <scope>INDUCTION BY NITRIC OXIDE (NO) AND BY HYPOXIA</scope>
    <scope>DORMANCY REGULON</scope>
    <source>
        <strain>ATCC 25618 / H37Rv</strain>
    </source>
</reference>
<reference key="4">
    <citation type="journal article" date="2008" name="Cell Host Microbe">
        <title>Mycobacterium tuberculosis senses host-derived carbon monoxide during macrophage infection.</title>
        <authorList>
            <person name="Shiloh M.U."/>
            <person name="Manzanillo P."/>
            <person name="Cox J.S."/>
        </authorList>
    </citation>
    <scope>INDUCTION BY CARBON MONOXIDE (CO)</scope>
    <source>
        <strain>ATCC 35801 / TMC 107 / Erdman</strain>
    </source>
</reference>
<reference key="5">
    <citation type="journal article" date="2008" name="J. Biol. Chem.">
        <title>Heme oxygenase-1-derived carbon monoxide induces the Mycobacterium tuberculosis dormancy regulon.</title>
        <authorList>
            <person name="Kumar A."/>
            <person name="Deshane J.S."/>
            <person name="Crossman D.K."/>
            <person name="Bolisetty S."/>
            <person name="Yan B.S."/>
            <person name="Kramnik I."/>
            <person name="Agarwal A."/>
            <person name="Steyn A.J."/>
        </authorList>
    </citation>
    <scope>INDUCTION BY CARBON MONOXIDE (CO)</scope>
    <scope>DORMANCY REGULON</scope>
    <source>
        <strain>ATCC 25618 / H37Rv</strain>
    </source>
</reference>
<reference key="6">
    <citation type="journal article" date="2011" name="Mol. Cell. Proteomics">
        <title>Proteogenomic analysis of Mycobacterium tuberculosis by high resolution mass spectrometry.</title>
        <authorList>
            <person name="Kelkar D.S."/>
            <person name="Kumar D."/>
            <person name="Kumar P."/>
            <person name="Balakrishnan L."/>
            <person name="Muthusamy B."/>
            <person name="Yadav A.K."/>
            <person name="Shrivastava P."/>
            <person name="Marimuthu A."/>
            <person name="Anand S."/>
            <person name="Sundaram H."/>
            <person name="Kingsbury R."/>
            <person name="Harsha H.C."/>
            <person name="Nair B."/>
            <person name="Prasad T.S."/>
            <person name="Chauhan D.S."/>
            <person name="Katoch K."/>
            <person name="Katoch V.M."/>
            <person name="Kumar P."/>
            <person name="Chaerkady R."/>
            <person name="Ramachandran S."/>
            <person name="Dash D."/>
            <person name="Pandey A."/>
        </authorList>
    </citation>
    <scope>IDENTIFICATION BY MASS SPECTROMETRY [LARGE SCALE ANALYSIS]</scope>
    <source>
        <strain>ATCC 25618 / H37Rv</strain>
    </source>
</reference>
<proteinExistence type="evidence at protein level"/>
<protein>
    <recommendedName>
        <fullName>Probable protein archease</fullName>
    </recommendedName>
</protein>